<evidence type="ECO:0000250" key="1"/>
<evidence type="ECO:0000255" key="2">
    <source>
        <dbReference type="HAMAP-Rule" id="MF_01834"/>
    </source>
</evidence>
<sequence>MEGHLSDGLVEVGPNGRERYYDSSGYGRPDGAGVRLAPVEAAYLLARGDLDAVDGMGLEAFLADTPDLVVPFLVYRDLRERGFYVSPALEGWVADHAGIDFVVHPRGDGPWDGTVAYRVRVVDERGSVRLDSLGDVVLAVVDEESELTYLETDRPAVDGTSGLEADLTADGVLLEDRVLCWDAPPALYEQGFYGQRMDREDGPLQLSLLEAAHLAATGVLSVAGGAAAVEARGRDAEGERFDRRLTVYRTLRERGVVPKTGFKFGADFRTYADVDSVSELGHSELLVRVLPADATLSPRDVALDVRLAHGVRKRMVFALVDDGDEIRWVSVSRLTP</sequence>
<protein>
    <recommendedName>
        <fullName evidence="2">tRNA-splicing endonuclease</fullName>
        <ecNumber evidence="2">4.6.1.16</ecNumber>
    </recommendedName>
    <alternativeName>
        <fullName evidence="2">tRNA-intron endonuclease</fullName>
    </alternativeName>
</protein>
<feature type="chain" id="PRO_0000309820" description="tRNA-splicing endonuclease">
    <location>
        <begin position="1"/>
        <end position="336"/>
    </location>
</feature>
<feature type="active site" evidence="2">
    <location>
        <position position="271"/>
    </location>
</feature>
<feature type="active site" evidence="2">
    <location>
        <position position="282"/>
    </location>
</feature>
<feature type="active site" evidence="2">
    <location>
        <position position="313"/>
    </location>
</feature>
<gene>
    <name evidence="2" type="primary">endA</name>
    <name type="ordered locus">NP_0444A</name>
</gene>
<accession>Q3IU70</accession>
<proteinExistence type="inferred from homology"/>
<reference key="1">
    <citation type="journal article" date="2005" name="Genome Res.">
        <title>Living with two extremes: conclusions from the genome sequence of Natronomonas pharaonis.</title>
        <authorList>
            <person name="Falb M."/>
            <person name="Pfeiffer F."/>
            <person name="Palm P."/>
            <person name="Rodewald K."/>
            <person name="Hickmann V."/>
            <person name="Tittor J."/>
            <person name="Oesterhelt D."/>
        </authorList>
    </citation>
    <scope>NUCLEOTIDE SEQUENCE [LARGE SCALE GENOMIC DNA]</scope>
    <source>
        <strain>ATCC 35678 / DSM 2160 / CIP 103997 / JCM 8858 / NBRC 14720 / NCIMB 2260 / Gabara</strain>
    </source>
</reference>
<name>ENDA_NATPD</name>
<comment type="function">
    <text evidence="1">Endonuclease that removes tRNA introns. Cleaves pre-tRNA at the 5'- and 3'-splice sites to release the intron. The products are an intron and two tRNA half-molecules bearing 2',3' cyclic phosphate and 5'-OH termini. Recognizes a pseudosymmetric substrate in which 2 bulged loops of 3 bases are separated by a stem of 4 bp (By similarity).</text>
</comment>
<comment type="catalytic activity">
    <reaction evidence="2">
        <text>pretRNA = a 3'-half-tRNA molecule with a 5'-OH end + a 5'-half-tRNA molecule with a 2',3'-cyclic phosphate end + an intron with a 2',3'-cyclic phosphate and a 5'-hydroxyl terminus.</text>
        <dbReference type="EC" id="4.6.1.16"/>
    </reaction>
</comment>
<comment type="subunit">
    <text evidence="2">Homodimer.</text>
</comment>
<comment type="similarity">
    <text evidence="2">Belongs to the tRNA-intron endonuclease family. Archaeal long subfamily.</text>
</comment>
<organism>
    <name type="scientific">Natronomonas pharaonis (strain ATCC 35678 / DSM 2160 / CIP 103997 / JCM 8858 / NBRC 14720 / NCIMB 2260 / Gabara)</name>
    <name type="common">Halobacterium pharaonis</name>
    <dbReference type="NCBI Taxonomy" id="348780"/>
    <lineage>
        <taxon>Archaea</taxon>
        <taxon>Methanobacteriati</taxon>
        <taxon>Methanobacteriota</taxon>
        <taxon>Stenosarchaea group</taxon>
        <taxon>Halobacteria</taxon>
        <taxon>Halobacteriales</taxon>
        <taxon>Haloarculaceae</taxon>
        <taxon>Natronomonas</taxon>
    </lineage>
</organism>
<dbReference type="EC" id="4.6.1.16" evidence="2"/>
<dbReference type="EMBL" id="CR936257">
    <property type="protein sequence ID" value="CAI48313.1"/>
    <property type="molecule type" value="Genomic_DNA"/>
</dbReference>
<dbReference type="RefSeq" id="WP_011321949.1">
    <property type="nucleotide sequence ID" value="NC_007426.1"/>
</dbReference>
<dbReference type="SMR" id="Q3IU70"/>
<dbReference type="STRING" id="348780.NP_0444A"/>
<dbReference type="EnsemblBacteria" id="CAI48313">
    <property type="protein sequence ID" value="CAI48313"/>
    <property type="gene ID" value="NP_0444A"/>
</dbReference>
<dbReference type="GeneID" id="3702672"/>
<dbReference type="KEGG" id="nph:NP_0444A"/>
<dbReference type="eggNOG" id="arCOG01701">
    <property type="taxonomic scope" value="Archaea"/>
</dbReference>
<dbReference type="HOGENOM" id="CLU_791347_0_0_2"/>
<dbReference type="OrthoDB" id="46045at2157"/>
<dbReference type="Proteomes" id="UP000002698">
    <property type="component" value="Chromosome"/>
</dbReference>
<dbReference type="GO" id="GO:0016829">
    <property type="term" value="F:lyase activity"/>
    <property type="evidence" value="ECO:0007669"/>
    <property type="project" value="UniProtKB-KW"/>
</dbReference>
<dbReference type="GO" id="GO:0003676">
    <property type="term" value="F:nucleic acid binding"/>
    <property type="evidence" value="ECO:0007669"/>
    <property type="project" value="InterPro"/>
</dbReference>
<dbReference type="GO" id="GO:0000213">
    <property type="term" value="F:tRNA-intron endonuclease activity"/>
    <property type="evidence" value="ECO:0007669"/>
    <property type="project" value="UniProtKB-UniRule"/>
</dbReference>
<dbReference type="GO" id="GO:0000379">
    <property type="term" value="P:tRNA-type intron splice site recognition and cleavage"/>
    <property type="evidence" value="ECO:0007669"/>
    <property type="project" value="TreeGrafter"/>
</dbReference>
<dbReference type="CDD" id="cd22363">
    <property type="entry name" value="tRNA-intron_lyase_C"/>
    <property type="match status" value="2"/>
</dbReference>
<dbReference type="Gene3D" id="3.40.1350.10">
    <property type="match status" value="2"/>
</dbReference>
<dbReference type="Gene3D" id="3.40.1170.20">
    <property type="entry name" value="tRNA intron endonuclease, N-terminal domain"/>
    <property type="match status" value="2"/>
</dbReference>
<dbReference type="HAMAP" id="MF_01834">
    <property type="entry name" value="EndA_long"/>
    <property type="match status" value="1"/>
</dbReference>
<dbReference type="InterPro" id="IPR011856">
    <property type="entry name" value="tRNA_endonuc-like_dom_sf"/>
</dbReference>
<dbReference type="InterPro" id="IPR036167">
    <property type="entry name" value="tRNA_intron_Endo_cat-like_sf"/>
</dbReference>
<dbReference type="InterPro" id="IPR006677">
    <property type="entry name" value="tRNA_intron_Endonuc_cat-like"/>
</dbReference>
<dbReference type="InterPro" id="IPR006678">
    <property type="entry name" value="tRNA_intron_Endonuc_N"/>
</dbReference>
<dbReference type="InterPro" id="IPR036740">
    <property type="entry name" value="tRNA_intron_Endonuc_N_sf"/>
</dbReference>
<dbReference type="InterPro" id="IPR006676">
    <property type="entry name" value="tRNA_splic"/>
</dbReference>
<dbReference type="InterPro" id="IPR023516">
    <property type="entry name" value="tRNA_splic_arch_long"/>
</dbReference>
<dbReference type="NCBIfam" id="TIGR00324">
    <property type="entry name" value="endA"/>
    <property type="match status" value="1"/>
</dbReference>
<dbReference type="NCBIfam" id="NF006794">
    <property type="entry name" value="PRK09300.1-1"/>
    <property type="match status" value="1"/>
</dbReference>
<dbReference type="PANTHER" id="PTHR13070:SF0">
    <property type="entry name" value="TRNA-SPLICING ENDONUCLEASE SUBUNIT SEN34"/>
    <property type="match status" value="1"/>
</dbReference>
<dbReference type="PANTHER" id="PTHR13070">
    <property type="entry name" value="TRNA-SPLICING ENDONUCLEASE SUBUNIT SEN34-RELATED"/>
    <property type="match status" value="1"/>
</dbReference>
<dbReference type="Pfam" id="PF01974">
    <property type="entry name" value="tRNA_int_endo"/>
    <property type="match status" value="1"/>
</dbReference>
<dbReference type="Pfam" id="PF02778">
    <property type="entry name" value="tRNA_int_endo_N"/>
    <property type="match status" value="2"/>
</dbReference>
<dbReference type="SUPFAM" id="SSF53032">
    <property type="entry name" value="tRNA-intron endonuclease catalytic domain-like"/>
    <property type="match status" value="2"/>
</dbReference>
<dbReference type="SUPFAM" id="SSF55267">
    <property type="entry name" value="tRNA-intron endonuclease N-terminal domain-like"/>
    <property type="match status" value="2"/>
</dbReference>
<keyword id="KW-0456">Lyase</keyword>
<keyword id="KW-1185">Reference proteome</keyword>
<keyword id="KW-0819">tRNA processing</keyword>